<name>GST_ASADI</name>
<protein>
    <recommendedName>
        <fullName>Glutathione S-transferase</fullName>
        <ecNumber>2.5.1.18</ecNumber>
    </recommendedName>
    <alternativeName>
        <fullName>GST class-sigma</fullName>
    </alternativeName>
    <alternativeName>
        <fullName>adGST</fullName>
    </alternativeName>
</protein>
<evidence type="ECO:0000250" key="1">
    <source>
        <dbReference type="UniProtKB" id="O60760"/>
    </source>
</evidence>
<evidence type="ECO:0000250" key="2">
    <source>
        <dbReference type="UniProtKB" id="P20137"/>
    </source>
</evidence>
<evidence type="ECO:0000269" key="3">
    <source>
    </source>
</evidence>
<evidence type="ECO:0000303" key="4">
    <source>
    </source>
</evidence>
<evidence type="ECO:0000305" key="5"/>
<sequence length="15" mass="1767">PSYKLHYFDLRAAGE</sequence>
<comment type="function">
    <text evidence="3">Has a strong specific activity toward 1-chloro-2,4-dinitrobenzene and ethacrynic acid.</text>
</comment>
<comment type="catalytic activity">
    <reaction evidence="3">
        <text>RX + glutathione = an S-substituted glutathione + a halide anion + H(+)</text>
        <dbReference type="Rhea" id="RHEA:16437"/>
        <dbReference type="ChEBI" id="CHEBI:15378"/>
        <dbReference type="ChEBI" id="CHEBI:16042"/>
        <dbReference type="ChEBI" id="CHEBI:17792"/>
        <dbReference type="ChEBI" id="CHEBI:57925"/>
        <dbReference type="ChEBI" id="CHEBI:90779"/>
        <dbReference type="EC" id="2.5.1.18"/>
    </reaction>
</comment>
<comment type="biophysicochemical properties">
    <kinetics>
        <KM evidence="3">0.68 mM for 1-chloro-2,4-dinitrobenzene</KM>
        <KM evidence="3">0.106 mM for glutathione</KM>
        <Vmax evidence="3">0.1446 mmol/min/mg enzyme toward CDNB</Vmax>
        <Vmax evidence="3">0.033 mmol/min/mg enzyme toward GSH</Vmax>
    </kinetics>
    <phDependence>
        <text evidence="3">Optimum pH is 8.5 with 1-chloro-2,4-dinitrobenzene as substrate.</text>
    </phDependence>
</comment>
<comment type="subunit">
    <text evidence="3">Homodimer.</text>
</comment>
<comment type="mass spectrometry" mass="23138.0" method="MALDI" evidence="3"/>
<comment type="miscellaneous">
    <text evidence="3">In A.dichotoma there are at least two isozymes of glutathione S-transferase.</text>
</comment>
<comment type="similarity">
    <text evidence="2">Belongs to the GST superfamily. Sigma family.</text>
</comment>
<accession>P83246</accession>
<proteinExistence type="evidence at protein level"/>
<organism evidence="5">
    <name type="scientific">Asaphis dichotoma</name>
    <dbReference type="NCBI Taxonomy" id="457753"/>
    <lineage>
        <taxon>Eukaryota</taxon>
        <taxon>Metazoa</taxon>
        <taxon>Spiralia</taxon>
        <taxon>Lophotrochozoa</taxon>
        <taxon>Mollusca</taxon>
        <taxon>Bivalvia</taxon>
        <taxon>Autobranchia</taxon>
        <taxon>Heteroconchia</taxon>
        <taxon>Euheterodonta</taxon>
        <taxon>Imparidentia</taxon>
        <taxon>Neoheterodontei</taxon>
        <taxon>Cardiida</taxon>
        <taxon>Tellinoidea</taxon>
        <taxon>Psammobiidae</taxon>
        <taxon>Asaphis</taxon>
    </lineage>
</organism>
<feature type="chain" id="PRO_0000185923" description="Glutathione S-transferase">
    <location>
        <begin position="1"/>
        <end position="15" status="greater than"/>
    </location>
</feature>
<feature type="binding site" evidence="1">
    <location>
        <position position="7"/>
    </location>
    <ligand>
        <name>glutathione</name>
        <dbReference type="ChEBI" id="CHEBI:57925"/>
    </ligand>
</feature>
<feature type="non-terminal residue" evidence="4">
    <location>
        <position position="15"/>
    </location>
</feature>
<reference evidence="5" key="1">
    <citation type="journal article" date="2002" name="Arch. Biochem. Biophys.">
        <title>Purification and characterization of a novel glutathione S-transferase from Asaphis dichotoma.</title>
        <authorList>
            <person name="Yang H.-L."/>
            <person name="Nie L.-J."/>
            <person name="Zhu S.-G."/>
            <person name="Zhou X.-W."/>
        </authorList>
    </citation>
    <scope>PROTEIN SEQUENCE</scope>
    <scope>FUNCTION</scope>
    <scope>SUBUNIT</scope>
    <scope>MASS SPECTROMETRY</scope>
    <scope>CIRCULAR DICHROISM ANALYSIS</scope>
    <source>
        <tissue>Gut</tissue>
        <tissue>Liver</tissue>
    </source>
</reference>
<dbReference type="EC" id="2.5.1.18"/>
<dbReference type="GO" id="GO:0004364">
    <property type="term" value="F:glutathione transferase activity"/>
    <property type="evidence" value="ECO:0000314"/>
    <property type="project" value="UniProtKB"/>
</dbReference>
<dbReference type="GO" id="GO:0042803">
    <property type="term" value="F:protein homodimerization activity"/>
    <property type="evidence" value="ECO:0000314"/>
    <property type="project" value="UniProtKB"/>
</dbReference>
<dbReference type="GO" id="GO:0006749">
    <property type="term" value="P:glutathione metabolic process"/>
    <property type="evidence" value="ECO:0000314"/>
    <property type="project" value="UniProtKB"/>
</dbReference>
<keyword id="KW-0903">Direct protein sequencing</keyword>
<keyword id="KW-0808">Transferase</keyword>